<sequence>MARMAVLWRKMRDNFQSKEFREYVSSTHFWGPAFSWGLPLAAFKDMKASPEIISGRMTTALILYSAIFMRFAYRVQPRNLLLMACHCTNVMAQSVQASRYLLYYYGGGGAEAKARDPPATAAAATSPGSQPPKQAS</sequence>
<accession>P0DKB6</accession>
<proteinExistence type="evidence at protein level"/>
<comment type="function">
    <text evidence="3">Mediates the uptake of pyruvate into mitochondria.</text>
</comment>
<comment type="catalytic activity">
    <reaction evidence="3">
        <text>pyruvate(out) + H(+)(out) = pyruvate(in) + H(+)(in)</text>
        <dbReference type="Rhea" id="RHEA:64720"/>
        <dbReference type="ChEBI" id="CHEBI:15361"/>
        <dbReference type="ChEBI" id="CHEBI:15378"/>
    </reaction>
</comment>
<comment type="interaction">
    <interactant intactId="EBI-44454819">
        <id>P0DKB6</id>
    </interactant>
    <interactant intactId="EBI-719403">
        <id>O95563</id>
        <label>MPC2</label>
    </interactant>
    <organismsDiffer>false</organismsDiffer>
    <experiments>4</experiments>
</comment>
<comment type="subcellular location">
    <subcellularLocation>
        <location evidence="3">Mitochondrion inner membrane</location>
        <topology evidence="1">Multi-pass membrane protein</topology>
    </subcellularLocation>
</comment>
<comment type="similarity">
    <text evidence="4">Belongs to the mitochondrial pyruvate carrier (MPC) (TC 2.A.105) family.</text>
</comment>
<dbReference type="EMBL" id="AC092473">
    <property type="status" value="NOT_ANNOTATED_CDS"/>
    <property type="molecule type" value="Genomic_DNA"/>
</dbReference>
<dbReference type="EMBL" id="DB337430">
    <property type="status" value="NOT_ANNOTATED_CDS"/>
    <property type="molecule type" value="mRNA"/>
</dbReference>
<dbReference type="CCDS" id="CCDS83466.1"/>
<dbReference type="RefSeq" id="NP_001182451.1">
    <property type="nucleotide sequence ID" value="NM_001195522.3"/>
</dbReference>
<dbReference type="ComplexPortal" id="CPX-8062">
    <property type="entry name" value="Mitochondrial pyruvate carrier complex, testis variant"/>
</dbReference>
<dbReference type="FunCoup" id="P0DKB6">
    <property type="interactions" value="23"/>
</dbReference>
<dbReference type="IntAct" id="P0DKB6">
    <property type="interactions" value="1"/>
</dbReference>
<dbReference type="STRING" id="9606.ENSP00000489748"/>
<dbReference type="TCDB" id="2.A.105.1.13">
    <property type="family name" value="the mitochondrial pyruvate carrier (mpc) family"/>
</dbReference>
<dbReference type="GlyGen" id="P0DKB6">
    <property type="glycosylation" value="1 site, 1 O-linked glycan (1 site)"/>
</dbReference>
<dbReference type="iPTMnet" id="P0DKB6"/>
<dbReference type="PhosphoSitePlus" id="P0DKB6"/>
<dbReference type="BioMuta" id="MPC1L"/>
<dbReference type="DMDM" id="408387577"/>
<dbReference type="jPOST" id="P0DKB6"/>
<dbReference type="MassIVE" id="P0DKB6"/>
<dbReference type="PeptideAtlas" id="P0DKB6"/>
<dbReference type="Antibodypedia" id="81963">
    <property type="antibodies" value="1 antibodies from 1 providers"/>
</dbReference>
<dbReference type="DNASU" id="347411"/>
<dbReference type="Ensembl" id="ENST00000423387.4">
    <property type="protein sequence ID" value="ENSP00000489748.1"/>
    <property type="gene ID" value="ENSG00000238205.4"/>
</dbReference>
<dbReference type="GeneID" id="347411"/>
<dbReference type="KEGG" id="hsa:347411"/>
<dbReference type="MANE-Select" id="ENST00000423387.4">
    <property type="protein sequence ID" value="ENSP00000489748.1"/>
    <property type="RefSeq nucleotide sequence ID" value="NM_001195522.3"/>
    <property type="RefSeq protein sequence ID" value="NP_001182451.1"/>
</dbReference>
<dbReference type="AGR" id="HGNC:44205"/>
<dbReference type="CTD" id="347411"/>
<dbReference type="GeneCards" id="MPC1L"/>
<dbReference type="HGNC" id="HGNC:44205">
    <property type="gene designation" value="MPC1L"/>
</dbReference>
<dbReference type="HPA" id="ENSG00000238205">
    <property type="expression patterns" value="Tissue enriched (testis)"/>
</dbReference>
<dbReference type="MIM" id="301103">
    <property type="type" value="gene"/>
</dbReference>
<dbReference type="neXtProt" id="NX_P0DKB6"/>
<dbReference type="VEuPathDB" id="HostDB:ENSG00000238205"/>
<dbReference type="GeneTree" id="ENSGT00940000163590"/>
<dbReference type="InParanoid" id="P0DKB6"/>
<dbReference type="OMA" id="LMACHCT"/>
<dbReference type="OrthoDB" id="1697690at2759"/>
<dbReference type="PAN-GO" id="P0DKB6">
    <property type="GO annotations" value="3 GO annotations based on evolutionary models"/>
</dbReference>
<dbReference type="PathwayCommons" id="P0DKB6"/>
<dbReference type="Reactome" id="R-HSA-70268">
    <property type="pathway name" value="Pyruvate metabolism"/>
</dbReference>
<dbReference type="BioGRID-ORCS" id="347411">
    <property type="hits" value="9 hits in 240 CRISPR screens"/>
</dbReference>
<dbReference type="GenomeRNAi" id="347411"/>
<dbReference type="Pharos" id="P0DKB6">
    <property type="development level" value="Tdark"/>
</dbReference>
<dbReference type="PRO" id="PR:P0DKB6"/>
<dbReference type="Proteomes" id="UP000005640">
    <property type="component" value="Chromosome X"/>
</dbReference>
<dbReference type="RNAct" id="P0DKB6">
    <property type="molecule type" value="protein"/>
</dbReference>
<dbReference type="Bgee" id="ENSG00000238205">
    <property type="expression patterns" value="Expressed in primordial germ cell in gonad and 41 other cell types or tissues"/>
</dbReference>
<dbReference type="GO" id="GO:0005743">
    <property type="term" value="C:mitochondrial inner membrane"/>
    <property type="evidence" value="ECO:0000314"/>
    <property type="project" value="UniProtKB"/>
</dbReference>
<dbReference type="GO" id="GO:0050833">
    <property type="term" value="F:pyruvate transmembrane transporter activity"/>
    <property type="evidence" value="ECO:0000318"/>
    <property type="project" value="GO_Central"/>
</dbReference>
<dbReference type="GO" id="GO:0006850">
    <property type="term" value="P:mitochondrial pyruvate transmembrane transport"/>
    <property type="evidence" value="ECO:0000314"/>
    <property type="project" value="UniProtKB"/>
</dbReference>
<dbReference type="InterPro" id="IPR005336">
    <property type="entry name" value="MPC"/>
</dbReference>
<dbReference type="PANTHER" id="PTHR14154">
    <property type="entry name" value="UPF0041 BRAIN PROTEIN 44-RELATED"/>
    <property type="match status" value="1"/>
</dbReference>
<dbReference type="Pfam" id="PF03650">
    <property type="entry name" value="MPC"/>
    <property type="match status" value="1"/>
</dbReference>
<gene>
    <name type="primary">MPC1L</name>
</gene>
<name>MPC1L_HUMAN</name>
<evidence type="ECO:0000255" key="1"/>
<evidence type="ECO:0000256" key="2">
    <source>
        <dbReference type="SAM" id="MobiDB-lite"/>
    </source>
</evidence>
<evidence type="ECO:0000269" key="3">
    <source>
    </source>
</evidence>
<evidence type="ECO:0000305" key="4"/>
<evidence type="ECO:0000305" key="5">
    <source>
    </source>
</evidence>
<feature type="chain" id="PRO_0000419605" description="Mitochondrial pyruvate carrier 1-like protein">
    <location>
        <begin position="1"/>
        <end position="136"/>
    </location>
</feature>
<feature type="topological domain" description="Mitochondrial matrix" evidence="5">
    <location>
        <begin position="2"/>
        <end position="19"/>
    </location>
</feature>
<feature type="transmembrane region" description="Helical" evidence="1">
    <location>
        <begin position="20"/>
        <end position="42"/>
    </location>
</feature>
<feature type="topological domain" description="Mother cell cytoplasmic" evidence="5">
    <location>
        <begin position="43"/>
        <end position="51"/>
    </location>
</feature>
<feature type="transmembrane region" description="Helical" evidence="1">
    <location>
        <begin position="52"/>
        <end position="74"/>
    </location>
</feature>
<feature type="topological domain" description="Mitochondrial matrix" evidence="5">
    <location>
        <begin position="75"/>
        <end position="136"/>
    </location>
</feature>
<feature type="region of interest" description="Disordered" evidence="2">
    <location>
        <begin position="111"/>
        <end position="136"/>
    </location>
</feature>
<feature type="compositionally biased region" description="Low complexity" evidence="2">
    <location>
        <begin position="117"/>
        <end position="136"/>
    </location>
</feature>
<protein>
    <recommendedName>
        <fullName>Mitochondrial pyruvate carrier 1-like protein</fullName>
    </recommendedName>
</protein>
<reference key="1">
    <citation type="journal article" date="2005" name="Nature">
        <title>The DNA sequence of the human X chromosome.</title>
        <authorList>
            <person name="Ross M.T."/>
            <person name="Grafham D.V."/>
            <person name="Coffey A.J."/>
            <person name="Scherer S."/>
            <person name="McLay K."/>
            <person name="Muzny D."/>
            <person name="Platzer M."/>
            <person name="Howell G.R."/>
            <person name="Burrows C."/>
            <person name="Bird C.P."/>
            <person name="Frankish A."/>
            <person name="Lovell F.L."/>
            <person name="Howe K.L."/>
            <person name="Ashurst J.L."/>
            <person name="Fulton R.S."/>
            <person name="Sudbrak R."/>
            <person name="Wen G."/>
            <person name="Jones M.C."/>
            <person name="Hurles M.E."/>
            <person name="Andrews T.D."/>
            <person name="Scott C.E."/>
            <person name="Searle S."/>
            <person name="Ramser J."/>
            <person name="Whittaker A."/>
            <person name="Deadman R."/>
            <person name="Carter N.P."/>
            <person name="Hunt S.E."/>
            <person name="Chen R."/>
            <person name="Cree A."/>
            <person name="Gunaratne P."/>
            <person name="Havlak P."/>
            <person name="Hodgson A."/>
            <person name="Metzker M.L."/>
            <person name="Richards S."/>
            <person name="Scott G."/>
            <person name="Steffen D."/>
            <person name="Sodergren E."/>
            <person name="Wheeler D.A."/>
            <person name="Worley K.C."/>
            <person name="Ainscough R."/>
            <person name="Ambrose K.D."/>
            <person name="Ansari-Lari M.A."/>
            <person name="Aradhya S."/>
            <person name="Ashwell R.I."/>
            <person name="Babbage A.K."/>
            <person name="Bagguley C.L."/>
            <person name="Ballabio A."/>
            <person name="Banerjee R."/>
            <person name="Barker G.E."/>
            <person name="Barlow K.F."/>
            <person name="Barrett I.P."/>
            <person name="Bates K.N."/>
            <person name="Beare D.M."/>
            <person name="Beasley H."/>
            <person name="Beasley O."/>
            <person name="Beck A."/>
            <person name="Bethel G."/>
            <person name="Blechschmidt K."/>
            <person name="Brady N."/>
            <person name="Bray-Allen S."/>
            <person name="Bridgeman A.M."/>
            <person name="Brown A.J."/>
            <person name="Brown M.J."/>
            <person name="Bonnin D."/>
            <person name="Bruford E.A."/>
            <person name="Buhay C."/>
            <person name="Burch P."/>
            <person name="Burford D."/>
            <person name="Burgess J."/>
            <person name="Burrill W."/>
            <person name="Burton J."/>
            <person name="Bye J.M."/>
            <person name="Carder C."/>
            <person name="Carrel L."/>
            <person name="Chako J."/>
            <person name="Chapman J.C."/>
            <person name="Chavez D."/>
            <person name="Chen E."/>
            <person name="Chen G."/>
            <person name="Chen Y."/>
            <person name="Chen Z."/>
            <person name="Chinault C."/>
            <person name="Ciccodicola A."/>
            <person name="Clark S.Y."/>
            <person name="Clarke G."/>
            <person name="Clee C.M."/>
            <person name="Clegg S."/>
            <person name="Clerc-Blankenburg K."/>
            <person name="Clifford K."/>
            <person name="Cobley V."/>
            <person name="Cole C.G."/>
            <person name="Conquer J.S."/>
            <person name="Corby N."/>
            <person name="Connor R.E."/>
            <person name="David R."/>
            <person name="Davies J."/>
            <person name="Davis C."/>
            <person name="Davis J."/>
            <person name="Delgado O."/>
            <person name="Deshazo D."/>
            <person name="Dhami P."/>
            <person name="Ding Y."/>
            <person name="Dinh H."/>
            <person name="Dodsworth S."/>
            <person name="Draper H."/>
            <person name="Dugan-Rocha S."/>
            <person name="Dunham A."/>
            <person name="Dunn M."/>
            <person name="Durbin K.J."/>
            <person name="Dutta I."/>
            <person name="Eades T."/>
            <person name="Ellwood M."/>
            <person name="Emery-Cohen A."/>
            <person name="Errington H."/>
            <person name="Evans K.L."/>
            <person name="Faulkner L."/>
            <person name="Francis F."/>
            <person name="Frankland J."/>
            <person name="Fraser A.E."/>
            <person name="Galgoczy P."/>
            <person name="Gilbert J."/>
            <person name="Gill R."/>
            <person name="Gloeckner G."/>
            <person name="Gregory S.G."/>
            <person name="Gribble S."/>
            <person name="Griffiths C."/>
            <person name="Grocock R."/>
            <person name="Gu Y."/>
            <person name="Gwilliam R."/>
            <person name="Hamilton C."/>
            <person name="Hart E.A."/>
            <person name="Hawes A."/>
            <person name="Heath P.D."/>
            <person name="Heitmann K."/>
            <person name="Hennig S."/>
            <person name="Hernandez J."/>
            <person name="Hinzmann B."/>
            <person name="Ho S."/>
            <person name="Hoffs M."/>
            <person name="Howden P.J."/>
            <person name="Huckle E.J."/>
            <person name="Hume J."/>
            <person name="Hunt P.J."/>
            <person name="Hunt A.R."/>
            <person name="Isherwood J."/>
            <person name="Jacob L."/>
            <person name="Johnson D."/>
            <person name="Jones S."/>
            <person name="de Jong P.J."/>
            <person name="Joseph S.S."/>
            <person name="Keenan S."/>
            <person name="Kelly S."/>
            <person name="Kershaw J.K."/>
            <person name="Khan Z."/>
            <person name="Kioschis P."/>
            <person name="Klages S."/>
            <person name="Knights A.J."/>
            <person name="Kosiura A."/>
            <person name="Kovar-Smith C."/>
            <person name="Laird G.K."/>
            <person name="Langford C."/>
            <person name="Lawlor S."/>
            <person name="Leversha M."/>
            <person name="Lewis L."/>
            <person name="Liu W."/>
            <person name="Lloyd C."/>
            <person name="Lloyd D.M."/>
            <person name="Loulseged H."/>
            <person name="Loveland J.E."/>
            <person name="Lovell J.D."/>
            <person name="Lozado R."/>
            <person name="Lu J."/>
            <person name="Lyne R."/>
            <person name="Ma J."/>
            <person name="Maheshwari M."/>
            <person name="Matthews L.H."/>
            <person name="McDowall J."/>
            <person name="McLaren S."/>
            <person name="McMurray A."/>
            <person name="Meidl P."/>
            <person name="Meitinger T."/>
            <person name="Milne S."/>
            <person name="Miner G."/>
            <person name="Mistry S.L."/>
            <person name="Morgan M."/>
            <person name="Morris S."/>
            <person name="Mueller I."/>
            <person name="Mullikin J.C."/>
            <person name="Nguyen N."/>
            <person name="Nordsiek G."/>
            <person name="Nyakatura G."/>
            <person name="O'dell C.N."/>
            <person name="Okwuonu G."/>
            <person name="Palmer S."/>
            <person name="Pandian R."/>
            <person name="Parker D."/>
            <person name="Parrish J."/>
            <person name="Pasternak S."/>
            <person name="Patel D."/>
            <person name="Pearce A.V."/>
            <person name="Pearson D.M."/>
            <person name="Pelan S.E."/>
            <person name="Perez L."/>
            <person name="Porter K.M."/>
            <person name="Ramsey Y."/>
            <person name="Reichwald K."/>
            <person name="Rhodes S."/>
            <person name="Ridler K.A."/>
            <person name="Schlessinger D."/>
            <person name="Schueler M.G."/>
            <person name="Sehra H.K."/>
            <person name="Shaw-Smith C."/>
            <person name="Shen H."/>
            <person name="Sheridan E.M."/>
            <person name="Shownkeen R."/>
            <person name="Skuce C.D."/>
            <person name="Smith M.L."/>
            <person name="Sotheran E.C."/>
            <person name="Steingruber H.E."/>
            <person name="Steward C.A."/>
            <person name="Storey R."/>
            <person name="Swann R.M."/>
            <person name="Swarbreck D."/>
            <person name="Tabor P.E."/>
            <person name="Taudien S."/>
            <person name="Taylor T."/>
            <person name="Teague B."/>
            <person name="Thomas K."/>
            <person name="Thorpe A."/>
            <person name="Timms K."/>
            <person name="Tracey A."/>
            <person name="Trevanion S."/>
            <person name="Tromans A.C."/>
            <person name="d'Urso M."/>
            <person name="Verduzco D."/>
            <person name="Villasana D."/>
            <person name="Waldron L."/>
            <person name="Wall M."/>
            <person name="Wang Q."/>
            <person name="Warren J."/>
            <person name="Warry G.L."/>
            <person name="Wei X."/>
            <person name="West A."/>
            <person name="Whitehead S.L."/>
            <person name="Whiteley M.N."/>
            <person name="Wilkinson J.E."/>
            <person name="Willey D.L."/>
            <person name="Williams G."/>
            <person name="Williams L."/>
            <person name="Williamson A."/>
            <person name="Williamson H."/>
            <person name="Wilming L."/>
            <person name="Woodmansey R.L."/>
            <person name="Wray P.W."/>
            <person name="Yen J."/>
            <person name="Zhang J."/>
            <person name="Zhou J."/>
            <person name="Zoghbi H."/>
            <person name="Zorilla S."/>
            <person name="Buck D."/>
            <person name="Reinhardt R."/>
            <person name="Poustka A."/>
            <person name="Rosenthal A."/>
            <person name="Lehrach H."/>
            <person name="Meindl A."/>
            <person name="Minx P.J."/>
            <person name="Hillier L.W."/>
            <person name="Willard H.F."/>
            <person name="Wilson R.K."/>
            <person name="Waterston R.H."/>
            <person name="Rice C.M."/>
            <person name="Vaudin M."/>
            <person name="Coulson A."/>
            <person name="Nelson D.L."/>
            <person name="Weinstock G."/>
            <person name="Sulston J.E."/>
            <person name="Durbin R.M."/>
            <person name="Hubbard T."/>
            <person name="Gibbs R.A."/>
            <person name="Beck S."/>
            <person name="Rogers J."/>
            <person name="Bentley D.R."/>
        </authorList>
    </citation>
    <scope>NUCLEOTIDE SEQUENCE [LARGE SCALE GENOMIC DNA]</scope>
</reference>
<reference key="2">
    <citation type="journal article" date="2004" name="Nat. Genet.">
        <title>Complete sequencing and characterization of 21,243 full-length human cDNAs.</title>
        <authorList>
            <person name="Ota T."/>
            <person name="Suzuki Y."/>
            <person name="Nishikawa T."/>
            <person name="Otsuki T."/>
            <person name="Sugiyama T."/>
            <person name="Irie R."/>
            <person name="Wakamatsu A."/>
            <person name="Hayashi K."/>
            <person name="Sato H."/>
            <person name="Nagai K."/>
            <person name="Kimura K."/>
            <person name="Makita H."/>
            <person name="Sekine M."/>
            <person name="Obayashi M."/>
            <person name="Nishi T."/>
            <person name="Shibahara T."/>
            <person name="Tanaka T."/>
            <person name="Ishii S."/>
            <person name="Yamamoto J."/>
            <person name="Saito K."/>
            <person name="Kawai Y."/>
            <person name="Isono Y."/>
            <person name="Nakamura Y."/>
            <person name="Nagahari K."/>
            <person name="Murakami K."/>
            <person name="Yasuda T."/>
            <person name="Iwayanagi T."/>
            <person name="Wagatsuma M."/>
            <person name="Shiratori A."/>
            <person name="Sudo H."/>
            <person name="Hosoiri T."/>
            <person name="Kaku Y."/>
            <person name="Kodaira H."/>
            <person name="Kondo H."/>
            <person name="Sugawara M."/>
            <person name="Takahashi M."/>
            <person name="Kanda K."/>
            <person name="Yokoi T."/>
            <person name="Furuya T."/>
            <person name="Kikkawa E."/>
            <person name="Omura Y."/>
            <person name="Abe K."/>
            <person name="Kamihara K."/>
            <person name="Katsuta N."/>
            <person name="Sato K."/>
            <person name="Tanikawa M."/>
            <person name="Yamazaki M."/>
            <person name="Ninomiya K."/>
            <person name="Ishibashi T."/>
            <person name="Yamashita H."/>
            <person name="Murakawa K."/>
            <person name="Fujimori K."/>
            <person name="Tanai H."/>
            <person name="Kimata M."/>
            <person name="Watanabe M."/>
            <person name="Hiraoka S."/>
            <person name="Chiba Y."/>
            <person name="Ishida S."/>
            <person name="Ono Y."/>
            <person name="Takiguchi S."/>
            <person name="Watanabe S."/>
            <person name="Yosida M."/>
            <person name="Hotuta T."/>
            <person name="Kusano J."/>
            <person name="Kanehori K."/>
            <person name="Takahashi-Fujii A."/>
            <person name="Hara H."/>
            <person name="Tanase T.-O."/>
            <person name="Nomura Y."/>
            <person name="Togiya S."/>
            <person name="Komai F."/>
            <person name="Hara R."/>
            <person name="Takeuchi K."/>
            <person name="Arita M."/>
            <person name="Imose N."/>
            <person name="Musashino K."/>
            <person name="Yuuki H."/>
            <person name="Oshima A."/>
            <person name="Sasaki N."/>
            <person name="Aotsuka S."/>
            <person name="Yoshikawa Y."/>
            <person name="Matsunawa H."/>
            <person name="Ichihara T."/>
            <person name="Shiohata N."/>
            <person name="Sano S."/>
            <person name="Moriya S."/>
            <person name="Momiyama H."/>
            <person name="Satoh N."/>
            <person name="Takami S."/>
            <person name="Terashima Y."/>
            <person name="Suzuki O."/>
            <person name="Nakagawa S."/>
            <person name="Senoh A."/>
            <person name="Mizoguchi H."/>
            <person name="Goto Y."/>
            <person name="Shimizu F."/>
            <person name="Wakebe H."/>
            <person name="Hishigaki H."/>
            <person name="Watanabe T."/>
            <person name="Sugiyama A."/>
            <person name="Takemoto M."/>
            <person name="Kawakami B."/>
            <person name="Yamazaki M."/>
            <person name="Watanabe K."/>
            <person name="Kumagai A."/>
            <person name="Itakura S."/>
            <person name="Fukuzumi Y."/>
            <person name="Fujimori Y."/>
            <person name="Komiyama M."/>
            <person name="Tashiro H."/>
            <person name="Tanigami A."/>
            <person name="Fujiwara T."/>
            <person name="Ono T."/>
            <person name="Yamada K."/>
            <person name="Fujii Y."/>
            <person name="Ozaki K."/>
            <person name="Hirao M."/>
            <person name="Ohmori Y."/>
            <person name="Kawabata A."/>
            <person name="Hikiji T."/>
            <person name="Kobatake N."/>
            <person name="Inagaki H."/>
            <person name="Ikema Y."/>
            <person name="Okamoto S."/>
            <person name="Okitani R."/>
            <person name="Kawakami T."/>
            <person name="Noguchi S."/>
            <person name="Itoh T."/>
            <person name="Shigeta K."/>
            <person name="Senba T."/>
            <person name="Matsumura K."/>
            <person name="Nakajima Y."/>
            <person name="Mizuno T."/>
            <person name="Morinaga M."/>
            <person name="Sasaki M."/>
            <person name="Togashi T."/>
            <person name="Oyama M."/>
            <person name="Hata H."/>
            <person name="Watanabe M."/>
            <person name="Komatsu T."/>
            <person name="Mizushima-Sugano J."/>
            <person name="Satoh T."/>
            <person name="Shirai Y."/>
            <person name="Takahashi Y."/>
            <person name="Nakagawa K."/>
            <person name="Okumura K."/>
            <person name="Nagase T."/>
            <person name="Nomura N."/>
            <person name="Kikuchi H."/>
            <person name="Masuho Y."/>
            <person name="Yamashita R."/>
            <person name="Nakai K."/>
            <person name="Yada T."/>
            <person name="Nakamura Y."/>
            <person name="Ohara O."/>
            <person name="Isogai T."/>
            <person name="Sugano S."/>
        </authorList>
    </citation>
    <scope>NUCLEOTIDE SEQUENCE [LARGE SCALE MRNA] OF 11-136</scope>
    <source>
        <tissue>Testis</tissue>
    </source>
</reference>
<reference key="3">
    <citation type="journal article" date="2016" name="J. Biol. Chem.">
        <title>MPC1-like Is a Placental Mammal-specific Mitochondrial Pyruvate Carrier Subunit Expressed in Postmeiotic Male Germ Cells.</title>
        <authorList>
            <person name="Vanderperre B."/>
            <person name="Cermakova K."/>
            <person name="Escoffier J."/>
            <person name="Kaba M."/>
            <person name="Bender T."/>
            <person name="Nef S."/>
            <person name="Martinou J.C."/>
        </authorList>
    </citation>
    <scope>FUNCTION</scope>
    <scope>TRANSPORTER ACTIVITY</scope>
    <scope>SUBCELLULAR LOCATION</scope>
    <scope>TOPOLOGY</scope>
</reference>
<organism>
    <name type="scientific">Homo sapiens</name>
    <name type="common">Human</name>
    <dbReference type="NCBI Taxonomy" id="9606"/>
    <lineage>
        <taxon>Eukaryota</taxon>
        <taxon>Metazoa</taxon>
        <taxon>Chordata</taxon>
        <taxon>Craniata</taxon>
        <taxon>Vertebrata</taxon>
        <taxon>Euteleostomi</taxon>
        <taxon>Mammalia</taxon>
        <taxon>Eutheria</taxon>
        <taxon>Euarchontoglires</taxon>
        <taxon>Primates</taxon>
        <taxon>Haplorrhini</taxon>
        <taxon>Catarrhini</taxon>
        <taxon>Hominidae</taxon>
        <taxon>Homo</taxon>
    </lineage>
</organism>
<keyword id="KW-0472">Membrane</keyword>
<keyword id="KW-0496">Mitochondrion</keyword>
<keyword id="KW-0999">Mitochondrion inner membrane</keyword>
<keyword id="KW-1267">Proteomics identification</keyword>
<keyword id="KW-1185">Reference proteome</keyword>
<keyword id="KW-0812">Transmembrane</keyword>
<keyword id="KW-1133">Transmembrane helix</keyword>
<keyword id="KW-0813">Transport</keyword>